<evidence type="ECO:0000250" key="1">
    <source>
        <dbReference type="UniProtKB" id="G5EGP4"/>
    </source>
</evidence>
<evidence type="ECO:0000250" key="2">
    <source>
        <dbReference type="UniProtKB" id="P32563"/>
    </source>
</evidence>
<evidence type="ECO:0000250" key="3">
    <source>
        <dbReference type="UniProtKB" id="Q29466"/>
    </source>
</evidence>
<evidence type="ECO:0000255" key="4"/>
<evidence type="ECO:0000269" key="5">
    <source>
    </source>
</evidence>
<evidence type="ECO:0000269" key="6">
    <source>
    </source>
</evidence>
<evidence type="ECO:0000269" key="7">
    <source>
    </source>
</evidence>
<evidence type="ECO:0000269" key="8">
    <source>
    </source>
</evidence>
<evidence type="ECO:0000269" key="9">
    <source>
    </source>
</evidence>
<evidence type="ECO:0000303" key="10">
    <source>
    </source>
</evidence>
<evidence type="ECO:0000305" key="11"/>
<evidence type="ECO:0000312" key="12">
    <source>
        <dbReference type="WormBase" id="ZK637.8a"/>
    </source>
</evidence>
<evidence type="ECO:0000312" key="13">
    <source>
        <dbReference type="WormBase" id="ZK637.8b"/>
    </source>
</evidence>
<evidence type="ECO:0000312" key="14">
    <source>
        <dbReference type="WormBase" id="ZK637.8c"/>
    </source>
</evidence>
<evidence type="ECO:0000312" key="15">
    <source>
        <dbReference type="WormBase" id="ZK637.8d"/>
    </source>
</evidence>
<evidence type="ECO:0000312" key="16">
    <source>
        <dbReference type="WormBase" id="ZK637.8e"/>
    </source>
</evidence>
<evidence type="ECO:0000312" key="17">
    <source>
        <dbReference type="WormBase" id="ZK637.8f"/>
    </source>
</evidence>
<sequence>MGDYVTPGEEPPQPGIYRSEQMCLAQLYLQSDASYQCVAELGELGLVQFRDLNPDVSSFQRKYVNEVRRCDEMERKLRYLEREIKKDQIPMLDTGENPDAPLPREMIDLEATFEKLENELREVNKNEETLKKNFSELTELKHILRKTQTFFEEVDHDRWRILEGGSGRRGRSTEREETRPLIDIGDMDDDSAARMSAQAAMLRLGFVAGVIQRERLPAFERLLWRACRGNVFLRTSEIDDVLNDTVTGDPVNKCVFIIFFQGDHLKTKVKKICEGFRATLYPCPDTPQERREMSIGVMTRIEDLKTVLGQTQDHRHRVLVAASKNVRMWLTKVRKIKSIYHTLNLFNIDVTQKCLIAEVWCPIAELDRIKMALKRGTDESGSQVPSILNRMETNEAPPTYNKTNKFTKGFQNIVDAYGIATYREINPAPYTMISFPFLFAVMFGDMGHGAIMLLAALFFILKEKQLEAARIKDEIFQTFFGGRYVIFLMGAFSIYTGFMYNDVFSKSINTFGSSWQNTIPESVIDYYLDDEKRSESQLILPPETAFDGNPYPIGVDPVWNLAEGNKLSFLNSMKMKMSVLFGIAQMTFGVLLSYQNFIYFKSDLDIKYMFIPQMIFLSSIFIYLCIQILSKWLFFGAVGGTVLGYKYPGSNCAPSLLIGLINMFMMKSRNAGFVDDSGETYPQCYLSTWYPGQATIEIILVVLALVQVPIMLFAKPYFLYRRDKQQSRYSTLTAESNQHQSVRADINQDDAEVVHAPEQTPKPSGHGHGHGDGPLEMGDVMVYQAIHTIEFVLGCVSHTASYLRLWALSLAHAQLSDVLWTMVFRNAFVLDGYTGAIATYILFFIFGSLSVFILVLMEGLSAFLHALRLHWVEFQSKFYGGLGYEFAPFSFEKILAEEREAEENL</sequence>
<keyword id="KW-0025">Alternative splicing</keyword>
<keyword id="KW-0375">Hydrogen ion transport</keyword>
<keyword id="KW-0406">Ion transport</keyword>
<keyword id="KW-0472">Membrane</keyword>
<keyword id="KW-1185">Reference proteome</keyword>
<keyword id="KW-0812">Transmembrane</keyword>
<keyword id="KW-1133">Transmembrane helix</keyword>
<keyword id="KW-0813">Transport</keyword>
<reference key="1">
    <citation type="journal article" date="2001" name="J. Biol. Chem.">
        <title>The Caenorhabditis elegans unc-32 gene encodes alternative forms of a vacuolar ATPase a subunit.</title>
        <authorList>
            <person name="Pujol N."/>
            <person name="Bonnerot C."/>
            <person name="Ewbank J.J."/>
            <person name="Kohara Y."/>
            <person name="Thierry-Mieg D."/>
        </authorList>
    </citation>
    <scope>NUCLEOTIDE SEQUENCE [MRNA] (ISOFORMS A; B; C; D; E AND F)</scope>
    <scope>TISSUE SPECIFICITY</scope>
    <scope>DEVELOPMENTAL STAGE</scope>
    <source>
        <strain>Bristol N2</strain>
    </source>
</reference>
<reference key="2">
    <citation type="journal article" date="1992" name="Nature">
        <title>The C. elegans genome sequencing project: a beginning.</title>
        <authorList>
            <person name="Sulston J."/>
            <person name="Du Z."/>
            <person name="Thomas K."/>
            <person name="Wilson R."/>
            <person name="Hillier L."/>
            <person name="Staden R."/>
            <person name="Halloran N."/>
            <person name="Green P."/>
            <person name="Thierry-Mieg J."/>
            <person name="Qiu L."/>
            <person name="Dear S."/>
            <person name="Coulson A."/>
            <person name="Craxton M."/>
            <person name="Durbin R."/>
            <person name="Berks M."/>
            <person name="Metzstein M."/>
            <person name="Hawkins T."/>
            <person name="Ainscough R."/>
            <person name="Waterston R."/>
        </authorList>
    </citation>
    <scope>NUCLEOTIDE SEQUENCE [LARGE SCALE GENOMIC DNA]</scope>
    <source>
        <strain>Bristol N2</strain>
    </source>
</reference>
<reference key="3">
    <citation type="journal article" date="1998" name="Science">
        <title>Genome sequence of the nematode C. elegans: a platform for investigating biology.</title>
        <authorList>
            <consortium name="The C. elegans sequencing consortium"/>
        </authorList>
    </citation>
    <scope>NUCLEOTIDE SEQUENCE [LARGE SCALE GENOMIC DNA]</scope>
    <scope>ALTERNATIVE SPLICING</scope>
    <source>
        <strain>Bristol N2</strain>
    </source>
</reference>
<reference key="4">
    <citation type="journal article" date="2001" name="J. Biol. Chem.">
        <title>Four subunit a isoforms of Caenorhabditis elegans vacuolar H+-ATPase. Cell-specific expression during development.</title>
        <authorList>
            <person name="Oka T."/>
            <person name="Toyomura T."/>
            <person name="Honjo K."/>
            <person name="Wada Y."/>
            <person name="Futai M."/>
        </authorList>
    </citation>
    <scope>INTERACTION WITH VHA-11</scope>
    <scope>SUBCELLULAR LOCATION</scope>
    <scope>TISSUE SPECIFICITY</scope>
    <scope>DEVELOPMENTAL STAGE</scope>
    <scope>DISRUPTION PHENOTYPE</scope>
</reference>
<reference key="5">
    <citation type="journal article" date="2005" name="Curr. Biol.">
        <title>The vacuolar H+ -ATPase mediates intracellular acidification required for neurodegeneration in C. elegans.</title>
        <authorList>
            <person name="Syntichaki P."/>
            <person name="Samara C."/>
            <person name="Tavernarakis N."/>
        </authorList>
    </citation>
    <scope>FUNCTION</scope>
</reference>
<reference key="6">
    <citation type="journal article" date="2010" name="FEBS J.">
        <title>A Caenorhabditis elegans model of orotic aciduria reveals enlarged lysosome-related organelles in embryos lacking umps-1 function.</title>
        <authorList>
            <person name="Levitte S."/>
            <person name="Salesky R."/>
            <person name="King B."/>
            <person name="Coe Smith S."/>
            <person name="Depper M."/>
            <person name="Cole M."/>
            <person name="Hermann G.J."/>
        </authorList>
    </citation>
    <scope>FUNCTION</scope>
</reference>
<reference key="7">
    <citation type="journal article" date="2012" name="Genetics">
        <title>V-ATPase V1 sector is required for corpse clearance and neurotransmission in Caenorhabditis elegans.</title>
        <authorList>
            <person name="Ernstrom G.G."/>
            <person name="Weimer R."/>
            <person name="Pawar D.R."/>
            <person name="Watanabe S."/>
            <person name="Hobson R.J."/>
            <person name="Greenstein D."/>
            <person name="Jorgensen E.M."/>
        </authorList>
    </citation>
    <scope>FUNCTION</scope>
</reference>
<proteinExistence type="evidence at protein level"/>
<comment type="function">
    <text evidence="1 2 3 7 8 9">Subunit of the V0 complex of vacuolar(H+)-ATPase (V-ATPase), a multisubunit enzyme composed of a peripheral complex (V1) that hydrolyzes ATP and a membrane integral complex (V0) that translocates protons (By similarity). V-ATPase is responsible for acidifying and maintaining the pH of intracellular compartments and in some cell types, is targeted to the plasma membrane, where it is responsible for acidifying the extracellular environment (By similarity). Required for assembly and activity of the vacuolar ATPase (By similarity). Regulates the size of gut granules during embryonic development (PubMed:20148972). In neurons, required for necrotic cell death by promoting intracellular acidification (PubMed:16005300). Required for cell death induced by hypoxia (PubMed:16005300). Required for acidification of synaptic vesicles and the release of neurotransmitters from adult neurons (PubMed:22426883).</text>
</comment>
<comment type="subunit">
    <text evidence="3 6">V-ATPase is a heteromultimeric enzyme made up of two complexes: the ATP-hydrolytic V1 complex and the proton translocation V0 complex (By similarity). The V1 complex consists of three catalytic AB heterodimers that form a heterohexamer, three peripheral stalks each consisting of EG heterodimers, one central rotor including subunits D and F, and the regulatory subunits C and H (By similarity). The proton translocation complex V0 consists of the proton transport subunit a, a ring of proteolipid subunits c9c'', rotary subunit d, subunits e and f, and the accessory subunits vah-19/Ac45 and vah-20/PRR (By similarity). Interacts with V-type proton ATPase subunit C vha-11 (PubMed:11441002).</text>
</comment>
<comment type="subcellular location">
    <subcellularLocation>
        <location evidence="6">Membrane</location>
        <topology evidence="4">Multi-pass membrane protein</topology>
    </subcellularLocation>
</comment>
<comment type="alternative products">
    <event type="alternative splicing"/>
    <isoform>
        <id>P30628-1</id>
        <name evidence="12">a</name>
        <name>A</name>
        <sequence type="displayed"/>
    </isoform>
    <isoform>
        <id>P30628-2</id>
        <name evidence="13">b</name>
        <name>B</name>
        <sequence type="described" ref="VSP_000346 VSP_000348"/>
    </isoform>
    <isoform>
        <id>P30628-3</id>
        <name evidence="14">c</name>
        <name>C</name>
        <sequence type="described" ref="VSP_000347"/>
    </isoform>
    <isoform>
        <id>P30628-4</id>
        <name evidence="15">d</name>
        <name>D</name>
        <sequence type="described" ref="VSP_000348"/>
    </isoform>
    <isoform>
        <id>P30628-5</id>
        <name evidence="16">e</name>
        <name>E</name>
        <sequence type="described" ref="VSP_000347 VSP_000348"/>
    </isoform>
    <isoform>
        <id>P30628-6</id>
        <name evidence="17">f</name>
        <name>F</name>
        <sequence type="described" ref="VSP_000346"/>
    </isoform>
</comment>
<comment type="tissue specificity">
    <text evidence="5 6">Ubiquitous expression in embryos. Expressed in gonads, intestine, neurons in the head and motoneurons in the ventral cord of larvae and adults (PubMed:11110798). Expressed in the vulvae and spermathecal uterine valves (PubMed:11441002). Weakly expressed in the pharynx (PubMed:11441002).</text>
</comment>
<comment type="tissue specificity">
    <molecule>Isoform c</molecule>
    <text evidence="5">Specifically expressed in the nervous system.</text>
</comment>
<comment type="tissue specificity">
    <molecule>Isoform f</molecule>
    <text evidence="5">Specifically expressed in the nervous system.</text>
</comment>
<comment type="developmental stage">
    <text evidence="5 6">Expressed in embryos, larvae and adult. Highest level of expression is in early embryos (PubMed:11110798). Expressed in the nerve ring and ventral nerve cord in L1 larvae (PubMed:11441002).</text>
</comment>
<comment type="disruption phenotype">
    <text evidence="6">RNAi-mediated knockdown causes embryonic lethality at the 100-cell stage.</text>
</comment>
<comment type="similarity">
    <text evidence="11">Belongs to the V-ATPase 116 kDa subunit family.</text>
</comment>
<feature type="chain" id="PRO_0000119221" description="V-type proton ATPase 116 kDa subunit a 1">
    <location>
        <begin position="1"/>
        <end position="905"/>
    </location>
</feature>
<feature type="topological domain" description="Cytoplasmic" evidence="4">
    <location>
        <begin position="1"/>
        <end position="424"/>
    </location>
</feature>
<feature type="transmembrane region" description="Helical" evidence="4">
    <location>
        <begin position="425"/>
        <end position="443"/>
    </location>
</feature>
<feature type="topological domain" description="Lumenal" evidence="4">
    <location>
        <begin position="444"/>
        <end position="445"/>
    </location>
</feature>
<feature type="transmembrane region" description="Helical" evidence="4">
    <location>
        <begin position="446"/>
        <end position="462"/>
    </location>
</feature>
<feature type="topological domain" description="Cytoplasmic" evidence="4">
    <location>
        <begin position="463"/>
        <end position="477"/>
    </location>
</feature>
<feature type="transmembrane region" description="Helical" evidence="4">
    <location>
        <begin position="478"/>
        <end position="507"/>
    </location>
</feature>
<feature type="topological domain" description="Lumenal" evidence="4">
    <location>
        <begin position="508"/>
        <end position="572"/>
    </location>
</feature>
<feature type="transmembrane region" description="Helical" evidence="4">
    <location>
        <begin position="573"/>
        <end position="592"/>
    </location>
</feature>
<feature type="topological domain" description="Cytoplasmic" evidence="4">
    <location>
        <begin position="593"/>
        <end position="610"/>
    </location>
</feature>
<feature type="transmembrane region" description="Helical" evidence="4">
    <location>
        <begin position="611"/>
        <end position="631"/>
    </location>
</feature>
<feature type="topological domain" description="Lumenal" evidence="4">
    <location>
        <begin position="632"/>
        <end position="699"/>
    </location>
</feature>
<feature type="transmembrane region" description="Helical" evidence="4">
    <location>
        <begin position="700"/>
        <end position="719"/>
    </location>
</feature>
<feature type="topological domain" description="Cytoplasmic" evidence="4">
    <location>
        <begin position="720"/>
        <end position="788"/>
    </location>
</feature>
<feature type="transmembrane region" description="Helical" evidence="4">
    <location>
        <begin position="789"/>
        <end position="813"/>
    </location>
</feature>
<feature type="topological domain" description="Lumenal" evidence="4">
    <location>
        <begin position="814"/>
        <end position="834"/>
    </location>
</feature>
<feature type="transmembrane region" description="Helical" evidence="4">
    <location>
        <begin position="835"/>
        <end position="873"/>
    </location>
</feature>
<feature type="topological domain" description="Cytoplasmic" evidence="4">
    <location>
        <begin position="874"/>
        <end position="905"/>
    </location>
</feature>
<feature type="splice variant" id="VSP_000347" description="In isoform c and isoform e." evidence="10">
    <original>VDHDRWRILEGGSGRRGRSTEREETRPLIDIGDMDDDSAARMSAQAAMLRLG</original>
    <variation>HEDMIASSAESSGIGEVLSADEEELSGRFSDAMSPLKLQLR</variation>
    <location>
        <begin position="154"/>
        <end position="205"/>
    </location>
</feature>
<feature type="splice variant" id="VSP_000346" description="In isoform b and isoform f." evidence="10">
    <original>VDHDRWRILEGGSGRRGRSTEREETRPLIDIGDMDDDSAARMSAQAAMLRL</original>
    <variation>AGTGEMLPPAAVESEEGLELTQHAAAGGATMFANF</variation>
    <location>
        <begin position="154"/>
        <end position="204"/>
    </location>
</feature>
<feature type="splice variant" id="VSP_000348" description="In isoform b, isoform d and isoform e." evidence="10">
    <original>ATIEIILVVLALVQVPIMLFAKPYFLYRRDKQQSRYSTLTAESNQHQ</original>
    <variation>SFFETIFVLVAIACVPVMLFGKPYFLWKEEKERREGGHRQL</variation>
    <location>
        <begin position="694"/>
        <end position="740"/>
    </location>
</feature>
<dbReference type="EMBL" id="AF320899">
    <property type="protein sequence ID" value="AAG41432.1"/>
    <property type="molecule type" value="mRNA"/>
</dbReference>
<dbReference type="EMBL" id="AF320900">
    <property type="protein sequence ID" value="AAG41433.1"/>
    <property type="molecule type" value="mRNA"/>
</dbReference>
<dbReference type="EMBL" id="AF320901">
    <property type="protein sequence ID" value="AAG41434.1"/>
    <property type="molecule type" value="mRNA"/>
</dbReference>
<dbReference type="EMBL" id="AF320902">
    <property type="protein sequence ID" value="AAG41435.1"/>
    <property type="molecule type" value="mRNA"/>
</dbReference>
<dbReference type="EMBL" id="AF320903">
    <property type="protein sequence ID" value="AAG41436.1"/>
    <property type="molecule type" value="mRNA"/>
</dbReference>
<dbReference type="EMBL" id="AF320904">
    <property type="protein sequence ID" value="AAG41437.1"/>
    <property type="molecule type" value="mRNA"/>
</dbReference>
<dbReference type="EMBL" id="BX284603">
    <property type="protein sequence ID" value="CAA77448.2"/>
    <property type="molecule type" value="Genomic_DNA"/>
</dbReference>
<dbReference type="EMBL" id="BX284603">
    <property type="protein sequence ID" value="CAA77453.2"/>
    <property type="molecule type" value="Genomic_DNA"/>
</dbReference>
<dbReference type="EMBL" id="BX284603">
    <property type="protein sequence ID" value="CAD30450.1"/>
    <property type="molecule type" value="Genomic_DNA"/>
</dbReference>
<dbReference type="EMBL" id="BX284603">
    <property type="protein sequence ID" value="CAD30451.1"/>
    <property type="molecule type" value="Genomic_DNA"/>
</dbReference>
<dbReference type="EMBL" id="BX284603">
    <property type="protein sequence ID" value="CAD30452.1"/>
    <property type="molecule type" value="Genomic_DNA"/>
</dbReference>
<dbReference type="EMBL" id="BX284603">
    <property type="protein sequence ID" value="CAD30453.1"/>
    <property type="molecule type" value="Genomic_DNA"/>
</dbReference>
<dbReference type="PIR" id="S15795">
    <property type="entry name" value="S15795"/>
</dbReference>
<dbReference type="RefSeq" id="NP_001023017.1">
    <molecule id="P30628-1"/>
    <property type="nucleotide sequence ID" value="NM_001027846.2"/>
</dbReference>
<dbReference type="RefSeq" id="NP_001023018.1">
    <molecule id="P30628-2"/>
    <property type="nucleotide sequence ID" value="NM_001027847.4"/>
</dbReference>
<dbReference type="RefSeq" id="NP_001023019.1">
    <molecule id="P30628-3"/>
    <property type="nucleotide sequence ID" value="NM_001027848.7"/>
</dbReference>
<dbReference type="RefSeq" id="NP_001023020.1">
    <molecule id="P30628-4"/>
    <property type="nucleotide sequence ID" value="NM_001027849.4"/>
</dbReference>
<dbReference type="RefSeq" id="NP_001023021.1">
    <molecule id="P30628-5"/>
    <property type="nucleotide sequence ID" value="NM_001027850.5"/>
</dbReference>
<dbReference type="RefSeq" id="NP_001023022.1">
    <molecule id="P30628-6"/>
    <property type="nucleotide sequence ID" value="NM_001027851.2"/>
</dbReference>
<dbReference type="BMRB" id="P30628"/>
<dbReference type="SMR" id="P30628"/>
<dbReference type="BioGRID" id="41458">
    <property type="interactions" value="9"/>
</dbReference>
<dbReference type="FunCoup" id="P30628">
    <property type="interactions" value="2274"/>
</dbReference>
<dbReference type="STRING" id="6239.ZK637.8a.1"/>
<dbReference type="TCDB" id="3.A.2.2.7">
    <property type="family name" value="the h+- or na+-translocating f-type, v-type and a-type atpase (f-atpase) superfamily"/>
</dbReference>
<dbReference type="iPTMnet" id="P30628"/>
<dbReference type="PaxDb" id="6239-ZK637.8a"/>
<dbReference type="PeptideAtlas" id="P30628"/>
<dbReference type="EnsemblMetazoa" id="ZK637.8a.1">
    <molecule id="P30628-1"/>
    <property type="protein sequence ID" value="ZK637.8a.1"/>
    <property type="gene ID" value="WBGene00006768"/>
</dbReference>
<dbReference type="EnsemblMetazoa" id="ZK637.8b.1">
    <molecule id="P30628-2"/>
    <property type="protein sequence ID" value="ZK637.8b.1"/>
    <property type="gene ID" value="WBGene00006768"/>
</dbReference>
<dbReference type="EnsemblMetazoa" id="ZK637.8c.1">
    <molecule id="P30628-3"/>
    <property type="protein sequence ID" value="ZK637.8c.1"/>
    <property type="gene ID" value="WBGene00006768"/>
</dbReference>
<dbReference type="EnsemblMetazoa" id="ZK637.8d.1">
    <molecule id="P30628-4"/>
    <property type="protein sequence ID" value="ZK637.8d.1"/>
    <property type="gene ID" value="WBGene00006768"/>
</dbReference>
<dbReference type="EnsemblMetazoa" id="ZK637.8e.1">
    <molecule id="P30628-5"/>
    <property type="protein sequence ID" value="ZK637.8e.1"/>
    <property type="gene ID" value="WBGene00006768"/>
</dbReference>
<dbReference type="EnsemblMetazoa" id="ZK637.8f.1">
    <molecule id="P30628-6"/>
    <property type="protein sequence ID" value="ZK637.8f.1"/>
    <property type="gene ID" value="WBGene00006768"/>
</dbReference>
<dbReference type="GeneID" id="176257"/>
<dbReference type="KEGG" id="cel:CELE_ZK637.8"/>
<dbReference type="UCSC" id="ZK637.8e">
    <molecule id="P30628-1"/>
    <property type="organism name" value="c. elegans"/>
</dbReference>
<dbReference type="AGR" id="WB:WBGene00006768"/>
<dbReference type="CTD" id="176257"/>
<dbReference type="WormBase" id="ZK637.8a">
    <molecule id="P30628-1"/>
    <property type="protein sequence ID" value="CE30573"/>
    <property type="gene ID" value="WBGene00006768"/>
    <property type="gene designation" value="unc-32"/>
</dbReference>
<dbReference type="WormBase" id="ZK637.8b">
    <molecule id="P30628-2"/>
    <property type="protein sequence ID" value="CE30574"/>
    <property type="gene ID" value="WBGene00006768"/>
    <property type="gene designation" value="unc-32"/>
</dbReference>
<dbReference type="WormBase" id="ZK637.8c">
    <molecule id="P30628-3"/>
    <property type="protein sequence ID" value="CE30575"/>
    <property type="gene ID" value="WBGene00006768"/>
    <property type="gene designation" value="unc-32"/>
</dbReference>
<dbReference type="WormBase" id="ZK637.8d">
    <molecule id="P30628-4"/>
    <property type="protein sequence ID" value="CE30576"/>
    <property type="gene ID" value="WBGene00006768"/>
    <property type="gene designation" value="unc-32"/>
</dbReference>
<dbReference type="WormBase" id="ZK637.8e">
    <molecule id="P30628-5"/>
    <property type="protein sequence ID" value="CE30577"/>
    <property type="gene ID" value="WBGene00006768"/>
    <property type="gene designation" value="unc-32"/>
</dbReference>
<dbReference type="WormBase" id="ZK637.8f">
    <molecule id="P30628-6"/>
    <property type="protein sequence ID" value="CE30578"/>
    <property type="gene ID" value="WBGene00006768"/>
    <property type="gene designation" value="unc-32"/>
</dbReference>
<dbReference type="eggNOG" id="KOG2189">
    <property type="taxonomic scope" value="Eukaryota"/>
</dbReference>
<dbReference type="GeneTree" id="ENSGT00950000182881"/>
<dbReference type="InParanoid" id="P30628"/>
<dbReference type="OMA" id="FYLWFFL"/>
<dbReference type="OrthoDB" id="10264220at2759"/>
<dbReference type="PhylomeDB" id="P30628"/>
<dbReference type="Reactome" id="R-CEL-1222556">
    <property type="pathway name" value="ROS and RNS production in phagocytes"/>
</dbReference>
<dbReference type="Reactome" id="R-CEL-6798695">
    <property type="pathway name" value="Neutrophil degranulation"/>
</dbReference>
<dbReference type="Reactome" id="R-CEL-77387">
    <property type="pathway name" value="Insulin receptor recycling"/>
</dbReference>
<dbReference type="Reactome" id="R-CEL-917977">
    <property type="pathway name" value="Transferrin endocytosis and recycling"/>
</dbReference>
<dbReference type="Reactome" id="R-CEL-9639288">
    <property type="pathway name" value="Amino acids regulate mTORC1"/>
</dbReference>
<dbReference type="Reactome" id="R-CEL-983712">
    <property type="pathway name" value="Ion channel transport"/>
</dbReference>
<dbReference type="PRO" id="PR:P30628"/>
<dbReference type="Proteomes" id="UP000001940">
    <property type="component" value="Chromosome III"/>
</dbReference>
<dbReference type="Bgee" id="WBGene00006768">
    <property type="expression patterns" value="Expressed in pharyngeal muscle cell (C elegans) and 9 other cell types or tissues"/>
</dbReference>
<dbReference type="GO" id="GO:0016020">
    <property type="term" value="C:membrane"/>
    <property type="evidence" value="ECO:0000303"/>
    <property type="project" value="UniProtKB"/>
</dbReference>
<dbReference type="GO" id="GO:0005886">
    <property type="term" value="C:plasma membrane"/>
    <property type="evidence" value="ECO:0000318"/>
    <property type="project" value="GO_Central"/>
</dbReference>
<dbReference type="GO" id="GO:0045202">
    <property type="term" value="C:synapse"/>
    <property type="evidence" value="ECO:0007669"/>
    <property type="project" value="GOC"/>
</dbReference>
<dbReference type="GO" id="GO:0016471">
    <property type="term" value="C:vacuolar proton-transporting V-type ATPase complex"/>
    <property type="evidence" value="ECO:0000353"/>
    <property type="project" value="WormBase"/>
</dbReference>
<dbReference type="GO" id="GO:0000220">
    <property type="term" value="C:vacuolar proton-transporting V-type ATPase, V0 domain"/>
    <property type="evidence" value="ECO:0007669"/>
    <property type="project" value="InterPro"/>
</dbReference>
<dbReference type="GO" id="GO:0051117">
    <property type="term" value="F:ATPase binding"/>
    <property type="evidence" value="ECO:0000318"/>
    <property type="project" value="GO_Central"/>
</dbReference>
<dbReference type="GO" id="GO:0046961">
    <property type="term" value="F:proton-transporting ATPase activity, rotational mechanism"/>
    <property type="evidence" value="ECO:0007669"/>
    <property type="project" value="InterPro"/>
</dbReference>
<dbReference type="GO" id="GO:0050830">
    <property type="term" value="P:defense response to Gram-positive bacterium"/>
    <property type="evidence" value="ECO:0000316"/>
    <property type="project" value="UniProtKB"/>
</dbReference>
<dbReference type="GO" id="GO:0009792">
    <property type="term" value="P:embryo development ending in birth or egg hatching"/>
    <property type="evidence" value="ECO:0000315"/>
    <property type="project" value="WormBase"/>
</dbReference>
<dbReference type="GO" id="GO:0040011">
    <property type="term" value="P:locomotion"/>
    <property type="evidence" value="ECO:0000315"/>
    <property type="project" value="WormBase"/>
</dbReference>
<dbReference type="GO" id="GO:0040013">
    <property type="term" value="P:negative regulation of locomotion"/>
    <property type="evidence" value="ECO:0000303"/>
    <property type="project" value="UniProtKB"/>
</dbReference>
<dbReference type="GO" id="GO:0002119">
    <property type="term" value="P:nematode larval development"/>
    <property type="evidence" value="ECO:0000315"/>
    <property type="project" value="WormBase"/>
</dbReference>
<dbReference type="GO" id="GO:0001956">
    <property type="term" value="P:positive regulation of neurotransmitter secretion"/>
    <property type="evidence" value="ECO:0000315"/>
    <property type="project" value="UniProtKB"/>
</dbReference>
<dbReference type="GO" id="GO:0043068">
    <property type="term" value="P:positive regulation of programmed cell death"/>
    <property type="evidence" value="ECO:0000315"/>
    <property type="project" value="WormBase"/>
</dbReference>
<dbReference type="GO" id="GO:0015986">
    <property type="term" value="P:proton motive force-driven ATP synthesis"/>
    <property type="evidence" value="ECO:0000303"/>
    <property type="project" value="UniProtKB"/>
</dbReference>
<dbReference type="GO" id="GO:0001666">
    <property type="term" value="P:response to hypoxia"/>
    <property type="evidence" value="ECO:0000315"/>
    <property type="project" value="WormBase"/>
</dbReference>
<dbReference type="GO" id="GO:0007271">
    <property type="term" value="P:synaptic transmission, cholinergic"/>
    <property type="evidence" value="ECO:0000315"/>
    <property type="project" value="WormBase"/>
</dbReference>
<dbReference type="GO" id="GO:0007035">
    <property type="term" value="P:vacuolar acidification"/>
    <property type="evidence" value="ECO:0000318"/>
    <property type="project" value="GO_Central"/>
</dbReference>
<dbReference type="InterPro" id="IPR002490">
    <property type="entry name" value="V-ATPase_116kDa_su"/>
</dbReference>
<dbReference type="InterPro" id="IPR026028">
    <property type="entry name" value="V-type_ATPase_116kDa_su_euka"/>
</dbReference>
<dbReference type="PANTHER" id="PTHR11629:SF63">
    <property type="entry name" value="V-TYPE PROTON ATPASE SUBUNIT A"/>
    <property type="match status" value="1"/>
</dbReference>
<dbReference type="PANTHER" id="PTHR11629">
    <property type="entry name" value="VACUOLAR PROTON ATPASES"/>
    <property type="match status" value="1"/>
</dbReference>
<dbReference type="Pfam" id="PF01496">
    <property type="entry name" value="V_ATPase_I"/>
    <property type="match status" value="1"/>
</dbReference>
<dbReference type="PIRSF" id="PIRSF001293">
    <property type="entry name" value="ATP6V0A1"/>
    <property type="match status" value="1"/>
</dbReference>
<gene>
    <name evidence="10 12" type="primary">unc-32</name>
    <name evidence="12" type="ORF">ZK637.8</name>
</gene>
<protein>
    <recommendedName>
        <fullName evidence="11">V-type proton ATPase 116 kDa subunit a 1</fullName>
        <shortName evidence="11">V-ATPase 116 kDa isoform a 1</shortName>
    </recommendedName>
    <alternativeName>
        <fullName evidence="12">Uncoordinated protein 32</fullName>
    </alternativeName>
    <alternativeName>
        <fullName evidence="11">Vacuolar proton translocating ATPase 116 kDa subunit a 1</fullName>
    </alternativeName>
</protein>
<accession>P30628</accession>
<accession>Q23555</accession>
<accession>Q9GPJ3</accession>
<accession>Q9GPJ4</accession>
<accession>Q9GPJ5</accession>
<accession>Q9GPJ6</accession>
<accession>Q9GPJ7</accession>
<accession>Q9GPJ8</accession>
<name>VPP1_CAEEL</name>
<organism>
    <name type="scientific">Caenorhabditis elegans</name>
    <dbReference type="NCBI Taxonomy" id="6239"/>
    <lineage>
        <taxon>Eukaryota</taxon>
        <taxon>Metazoa</taxon>
        <taxon>Ecdysozoa</taxon>
        <taxon>Nematoda</taxon>
        <taxon>Chromadorea</taxon>
        <taxon>Rhabditida</taxon>
        <taxon>Rhabditina</taxon>
        <taxon>Rhabditomorpha</taxon>
        <taxon>Rhabditoidea</taxon>
        <taxon>Rhabditidae</taxon>
        <taxon>Peloderinae</taxon>
        <taxon>Caenorhabditis</taxon>
    </lineage>
</organism>